<comment type="function">
    <text evidence="1">Acts as a tumor suppressor. Inhibits DNA synthesis. Its ability to inhibit oncogenic transformation is mediated through its association with RB1. Plays a role in the expression of genes required for the G1/S transition (By similarity).</text>
</comment>
<comment type="subunit">
    <text evidence="1">Component of the DREAM complex (also named LINC complex) at least composed of E2F4, E2F5, LIN9, LIN37, LIN52, LIN54, MYBL1, MYBL2, RBL1, RBL2, RBBP4, TFDP1 and TFDP2. The complex exists in quiescent cells where it represses cell cycle-dependent genes. It dissociates in S phase when LIN9, LIN37, LIN52 and LIN54 form a subcomplex that binds to MYBL2. Interacts with RB1 (By similarity).</text>
</comment>
<comment type="subcellular location">
    <subcellularLocation>
        <location evidence="1">Nucleus</location>
        <location evidence="1">Nucleoplasm</location>
    </subcellularLocation>
    <text evidence="1">Found in perinucleolar structures. Associated with chromatin.</text>
</comment>
<comment type="similarity">
    <text evidence="5">Belongs to the lin-9 family.</text>
</comment>
<reference key="1">
    <citation type="submission" date="2005-06" db="EMBL/GenBank/DDBJ databases">
        <title>DNA sequences of macaque genes expressed in brain or testis and its evolutionary implications.</title>
        <authorList>
            <consortium name="International consortium for macaque cDNA sequencing and analysis"/>
        </authorList>
    </citation>
    <scope>NUCLEOTIDE SEQUENCE [LARGE SCALE MRNA]</scope>
    <source>
        <tissue>Testis</tissue>
    </source>
</reference>
<dbReference type="EMBL" id="AB168419">
    <property type="protein sequence ID" value="BAE00540.1"/>
    <property type="molecule type" value="mRNA"/>
</dbReference>
<dbReference type="RefSeq" id="NP_001306385.1">
    <property type="nucleotide sequence ID" value="NM_001319456.1"/>
</dbReference>
<dbReference type="SMR" id="Q4R8N2"/>
<dbReference type="STRING" id="9541.ENSMFAP00000008644"/>
<dbReference type="eggNOG" id="KOG1019">
    <property type="taxonomic scope" value="Eukaryota"/>
</dbReference>
<dbReference type="Proteomes" id="UP000233100">
    <property type="component" value="Unplaced"/>
</dbReference>
<dbReference type="GO" id="GO:0005654">
    <property type="term" value="C:nucleoplasm"/>
    <property type="evidence" value="ECO:0007669"/>
    <property type="project" value="UniProtKB-SubCell"/>
</dbReference>
<dbReference type="GO" id="GO:0017053">
    <property type="term" value="C:transcription repressor complex"/>
    <property type="evidence" value="ECO:0007669"/>
    <property type="project" value="InterPro"/>
</dbReference>
<dbReference type="GO" id="GO:0003677">
    <property type="term" value="F:DNA binding"/>
    <property type="evidence" value="ECO:0007669"/>
    <property type="project" value="TreeGrafter"/>
</dbReference>
<dbReference type="GO" id="GO:0071897">
    <property type="term" value="P:DNA biosynthetic process"/>
    <property type="evidence" value="ECO:0007669"/>
    <property type="project" value="UniProtKB-KW"/>
</dbReference>
<dbReference type="GO" id="GO:0006351">
    <property type="term" value="P:DNA-templated transcription"/>
    <property type="evidence" value="ECO:0007669"/>
    <property type="project" value="InterPro"/>
</dbReference>
<dbReference type="GO" id="GO:0051726">
    <property type="term" value="P:regulation of cell cycle"/>
    <property type="evidence" value="ECO:0007669"/>
    <property type="project" value="TreeGrafter"/>
</dbReference>
<dbReference type="GO" id="GO:0006357">
    <property type="term" value="P:regulation of transcription by RNA polymerase II"/>
    <property type="evidence" value="ECO:0007669"/>
    <property type="project" value="TreeGrafter"/>
</dbReference>
<dbReference type="InterPro" id="IPR033471">
    <property type="entry name" value="DIRP"/>
</dbReference>
<dbReference type="InterPro" id="IPR010561">
    <property type="entry name" value="LIN-9/ALY1"/>
</dbReference>
<dbReference type="InterPro" id="IPR045831">
    <property type="entry name" value="LIN9_C"/>
</dbReference>
<dbReference type="PANTHER" id="PTHR21689">
    <property type="entry name" value="LIN-9"/>
    <property type="match status" value="1"/>
</dbReference>
<dbReference type="PANTHER" id="PTHR21689:SF2">
    <property type="entry name" value="PROTEIN LIN-9 HOMOLOG"/>
    <property type="match status" value="1"/>
</dbReference>
<dbReference type="Pfam" id="PF06584">
    <property type="entry name" value="DIRP"/>
    <property type="match status" value="1"/>
</dbReference>
<dbReference type="Pfam" id="PF19438">
    <property type="entry name" value="LIN9_C"/>
    <property type="match status" value="1"/>
</dbReference>
<dbReference type="SMART" id="SM01135">
    <property type="entry name" value="DIRP"/>
    <property type="match status" value="1"/>
</dbReference>
<gene>
    <name type="primary">LIN9</name>
    <name type="ORF">QtsA-12009</name>
</gene>
<feature type="initiator methionine" description="Removed" evidence="2">
    <location>
        <position position="1"/>
    </location>
</feature>
<feature type="chain" id="PRO_0000249547" description="Protein lin-9 homolog">
    <location>
        <begin position="2"/>
        <end position="542"/>
    </location>
</feature>
<feature type="region of interest" description="Sufficient for interaction with RB1" evidence="1">
    <location>
        <begin position="2"/>
        <end position="296"/>
    </location>
</feature>
<feature type="coiled-coil region" evidence="4">
    <location>
        <begin position="355"/>
        <end position="413"/>
    </location>
</feature>
<feature type="modified residue" description="N-acetylalanine" evidence="2">
    <location>
        <position position="2"/>
    </location>
</feature>
<feature type="modified residue" description="Phosphoserine" evidence="2">
    <location>
        <position position="65"/>
    </location>
</feature>
<feature type="modified residue" description="Phosphoserine" evidence="3">
    <location>
        <position position="95"/>
    </location>
</feature>
<feature type="modified residue" description="Phosphothreonine" evidence="2">
    <location>
        <position position="96"/>
    </location>
</feature>
<feature type="modified residue" description="Phosphothreonine" evidence="2">
    <location>
        <position position="304"/>
    </location>
</feature>
<feature type="modified residue" description="Phosphoserine" evidence="2">
    <location>
        <position position="309"/>
    </location>
</feature>
<feature type="modified residue" description="Phosphoserine" evidence="2">
    <location>
        <position position="321"/>
    </location>
</feature>
<feature type="cross-link" description="Glycyl lysine isopeptide (Lys-Gly) (interchain with G-Cter in SUMO2)" evidence="2">
    <location>
        <position position="21"/>
    </location>
</feature>
<evidence type="ECO:0000250" key="1"/>
<evidence type="ECO:0000250" key="2">
    <source>
        <dbReference type="UniProtKB" id="Q5TKA1"/>
    </source>
</evidence>
<evidence type="ECO:0000250" key="3">
    <source>
        <dbReference type="UniProtKB" id="Q8C735"/>
    </source>
</evidence>
<evidence type="ECO:0000255" key="4"/>
<evidence type="ECO:0000305" key="5"/>
<accession>Q4R8N2</accession>
<keyword id="KW-0007">Acetylation</keyword>
<keyword id="KW-0131">Cell cycle</keyword>
<keyword id="KW-0175">Coiled coil</keyword>
<keyword id="KW-0237">DNA synthesis</keyword>
<keyword id="KW-1017">Isopeptide bond</keyword>
<keyword id="KW-0539">Nucleus</keyword>
<keyword id="KW-0597">Phosphoprotein</keyword>
<keyword id="KW-1185">Reference proteome</keyword>
<keyword id="KW-0043">Tumor suppressor</keyword>
<keyword id="KW-0832">Ubl conjugation</keyword>
<sequence length="542" mass="61960">MAELDQLPDESSSAKALVSLKEGSLSNTWNEKYSSLQKTPVWKGRNTSPAVEMPFRNSKRSRLFSDEDDRQINTRSPKRNQRVAMVPQKFTATMSTPDKKASQKIGFRLRNLLKLPKAHKWCIYEWFYSNIDKPLFEGDNDFCVCLKESFPNLKTRKLTRVEWGKIRRLMGKPRRCSSAFFEEERSALKQKRQKIRLLQQRKVADVSQFKDLPDEIPLPLVIGTKVTARLRGVHDGLFTGQIDAVDTLNATYRVTFDRTGLGTHTIPDYEVLSNEPHETMPIAAFGQKQRPSRFFMTPPRLHYTPPLQSPIMDNDPLLGQSPWRSKISGSDTETLGGFPVEFLIQVTRLSKILMIKKEHIKKLREMNTDAEKLKSYSMPISIEFQRRYATIVLELEQLNKDLNKVLHKVQQYCYELAPDQGLQPADQPTDMRRRCEEEAQEIVRHANSSTGQPCVENENLTDLISRLTAILLQIKCLAEGGDLNSFEFKSLTDSLNDIKSTIDASNISCFQNNVEIHVAHIQSGLSQMGNLHAFAANNTNRD</sequence>
<protein>
    <recommendedName>
        <fullName>Protein lin-9 homolog</fullName>
    </recommendedName>
</protein>
<organism>
    <name type="scientific">Macaca fascicularis</name>
    <name type="common">Crab-eating macaque</name>
    <name type="synonym">Cynomolgus monkey</name>
    <dbReference type="NCBI Taxonomy" id="9541"/>
    <lineage>
        <taxon>Eukaryota</taxon>
        <taxon>Metazoa</taxon>
        <taxon>Chordata</taxon>
        <taxon>Craniata</taxon>
        <taxon>Vertebrata</taxon>
        <taxon>Euteleostomi</taxon>
        <taxon>Mammalia</taxon>
        <taxon>Eutheria</taxon>
        <taxon>Euarchontoglires</taxon>
        <taxon>Primates</taxon>
        <taxon>Haplorrhini</taxon>
        <taxon>Catarrhini</taxon>
        <taxon>Cercopithecidae</taxon>
        <taxon>Cercopithecinae</taxon>
        <taxon>Macaca</taxon>
    </lineage>
</organism>
<proteinExistence type="evidence at transcript level"/>
<name>LIN9_MACFA</name>